<reference key="1">
    <citation type="journal article" date="2009" name="PLoS Genet.">
        <title>Organised genome dynamics in the Escherichia coli species results in highly diverse adaptive paths.</title>
        <authorList>
            <person name="Touchon M."/>
            <person name="Hoede C."/>
            <person name="Tenaillon O."/>
            <person name="Barbe V."/>
            <person name="Baeriswyl S."/>
            <person name="Bidet P."/>
            <person name="Bingen E."/>
            <person name="Bonacorsi S."/>
            <person name="Bouchier C."/>
            <person name="Bouvet O."/>
            <person name="Calteau A."/>
            <person name="Chiapello H."/>
            <person name="Clermont O."/>
            <person name="Cruveiller S."/>
            <person name="Danchin A."/>
            <person name="Diard M."/>
            <person name="Dossat C."/>
            <person name="Karoui M.E."/>
            <person name="Frapy E."/>
            <person name="Garry L."/>
            <person name="Ghigo J.M."/>
            <person name="Gilles A.M."/>
            <person name="Johnson J."/>
            <person name="Le Bouguenec C."/>
            <person name="Lescat M."/>
            <person name="Mangenot S."/>
            <person name="Martinez-Jehanne V."/>
            <person name="Matic I."/>
            <person name="Nassif X."/>
            <person name="Oztas S."/>
            <person name="Petit M.A."/>
            <person name="Pichon C."/>
            <person name="Rouy Z."/>
            <person name="Ruf C.S."/>
            <person name="Schneider D."/>
            <person name="Tourret J."/>
            <person name="Vacherie B."/>
            <person name="Vallenet D."/>
            <person name="Medigue C."/>
            <person name="Rocha E.P.C."/>
            <person name="Denamur E."/>
        </authorList>
    </citation>
    <scope>NUCLEOTIDE SEQUENCE [LARGE SCALE GENOMIC DNA]</scope>
    <source>
        <strain>S88 / ExPEC</strain>
    </source>
</reference>
<proteinExistence type="inferred from homology"/>
<gene>
    <name evidence="1" type="primary">dxs</name>
    <name type="ordered locus">ECS88_0415</name>
</gene>
<comment type="function">
    <text evidence="1">Catalyzes the acyloin condensation reaction between C atoms 2 and 3 of pyruvate and glyceraldehyde 3-phosphate to yield 1-deoxy-D-xylulose-5-phosphate (DXP).</text>
</comment>
<comment type="catalytic activity">
    <reaction evidence="1">
        <text>D-glyceraldehyde 3-phosphate + pyruvate + H(+) = 1-deoxy-D-xylulose 5-phosphate + CO2</text>
        <dbReference type="Rhea" id="RHEA:12605"/>
        <dbReference type="ChEBI" id="CHEBI:15361"/>
        <dbReference type="ChEBI" id="CHEBI:15378"/>
        <dbReference type="ChEBI" id="CHEBI:16526"/>
        <dbReference type="ChEBI" id="CHEBI:57792"/>
        <dbReference type="ChEBI" id="CHEBI:59776"/>
        <dbReference type="EC" id="2.2.1.7"/>
    </reaction>
</comment>
<comment type="cofactor">
    <cofactor evidence="1">
        <name>Mg(2+)</name>
        <dbReference type="ChEBI" id="CHEBI:18420"/>
    </cofactor>
    <text evidence="1">Binds 1 Mg(2+) ion per subunit.</text>
</comment>
<comment type="cofactor">
    <cofactor evidence="1">
        <name>thiamine diphosphate</name>
        <dbReference type="ChEBI" id="CHEBI:58937"/>
    </cofactor>
    <text evidence="1">Binds 1 thiamine pyrophosphate per subunit.</text>
</comment>
<comment type="pathway">
    <text evidence="1">Metabolic intermediate biosynthesis; 1-deoxy-D-xylulose 5-phosphate biosynthesis; 1-deoxy-D-xylulose 5-phosphate from D-glyceraldehyde 3-phosphate and pyruvate: step 1/1.</text>
</comment>
<comment type="subunit">
    <text evidence="1">Homodimer.</text>
</comment>
<comment type="similarity">
    <text evidence="1">Belongs to the transketolase family. DXPS subfamily.</text>
</comment>
<dbReference type="EC" id="2.2.1.7" evidence="1"/>
<dbReference type="EMBL" id="CU928161">
    <property type="protein sequence ID" value="CAR01763.1"/>
    <property type="molecule type" value="Genomic_DNA"/>
</dbReference>
<dbReference type="RefSeq" id="WP_000006815.1">
    <property type="nucleotide sequence ID" value="NC_011742.1"/>
</dbReference>
<dbReference type="SMR" id="B7MD78"/>
<dbReference type="KEGG" id="ecz:ECS88_0415"/>
<dbReference type="HOGENOM" id="CLU_009227_1_4_6"/>
<dbReference type="UniPathway" id="UPA00064">
    <property type="reaction ID" value="UER00091"/>
</dbReference>
<dbReference type="Proteomes" id="UP000000747">
    <property type="component" value="Chromosome"/>
</dbReference>
<dbReference type="GO" id="GO:0005829">
    <property type="term" value="C:cytosol"/>
    <property type="evidence" value="ECO:0007669"/>
    <property type="project" value="TreeGrafter"/>
</dbReference>
<dbReference type="GO" id="GO:0008661">
    <property type="term" value="F:1-deoxy-D-xylulose-5-phosphate synthase activity"/>
    <property type="evidence" value="ECO:0007669"/>
    <property type="project" value="UniProtKB-UniRule"/>
</dbReference>
<dbReference type="GO" id="GO:0000287">
    <property type="term" value="F:magnesium ion binding"/>
    <property type="evidence" value="ECO:0007669"/>
    <property type="project" value="UniProtKB-UniRule"/>
</dbReference>
<dbReference type="GO" id="GO:0030976">
    <property type="term" value="F:thiamine pyrophosphate binding"/>
    <property type="evidence" value="ECO:0007669"/>
    <property type="project" value="UniProtKB-UniRule"/>
</dbReference>
<dbReference type="GO" id="GO:0052865">
    <property type="term" value="P:1-deoxy-D-xylulose 5-phosphate biosynthetic process"/>
    <property type="evidence" value="ECO:0007669"/>
    <property type="project" value="UniProtKB-UniPathway"/>
</dbReference>
<dbReference type="GO" id="GO:0019288">
    <property type="term" value="P:isopentenyl diphosphate biosynthetic process, methylerythritol 4-phosphate pathway"/>
    <property type="evidence" value="ECO:0007669"/>
    <property type="project" value="TreeGrafter"/>
</dbReference>
<dbReference type="GO" id="GO:0016114">
    <property type="term" value="P:terpenoid biosynthetic process"/>
    <property type="evidence" value="ECO:0007669"/>
    <property type="project" value="UniProtKB-UniRule"/>
</dbReference>
<dbReference type="GO" id="GO:0009228">
    <property type="term" value="P:thiamine biosynthetic process"/>
    <property type="evidence" value="ECO:0007669"/>
    <property type="project" value="UniProtKB-UniRule"/>
</dbReference>
<dbReference type="CDD" id="cd02007">
    <property type="entry name" value="TPP_DXS"/>
    <property type="match status" value="1"/>
</dbReference>
<dbReference type="CDD" id="cd07033">
    <property type="entry name" value="TPP_PYR_DXS_TK_like"/>
    <property type="match status" value="1"/>
</dbReference>
<dbReference type="FunFam" id="3.40.50.920:FF:000002">
    <property type="entry name" value="1-deoxy-D-xylulose-5-phosphate synthase"/>
    <property type="match status" value="1"/>
</dbReference>
<dbReference type="FunFam" id="3.40.50.970:FF:000005">
    <property type="entry name" value="1-deoxy-D-xylulose-5-phosphate synthase"/>
    <property type="match status" value="1"/>
</dbReference>
<dbReference type="Gene3D" id="3.40.50.920">
    <property type="match status" value="1"/>
</dbReference>
<dbReference type="Gene3D" id="3.40.50.970">
    <property type="match status" value="2"/>
</dbReference>
<dbReference type="HAMAP" id="MF_00315">
    <property type="entry name" value="DXP_synth"/>
    <property type="match status" value="1"/>
</dbReference>
<dbReference type="InterPro" id="IPR005477">
    <property type="entry name" value="Dxylulose-5-P_synthase"/>
</dbReference>
<dbReference type="InterPro" id="IPR029061">
    <property type="entry name" value="THDP-binding"/>
</dbReference>
<dbReference type="InterPro" id="IPR009014">
    <property type="entry name" value="Transketo_C/PFOR_II"/>
</dbReference>
<dbReference type="InterPro" id="IPR005475">
    <property type="entry name" value="Transketolase-like_Pyr-bd"/>
</dbReference>
<dbReference type="InterPro" id="IPR020826">
    <property type="entry name" value="Transketolase_BS"/>
</dbReference>
<dbReference type="InterPro" id="IPR033248">
    <property type="entry name" value="Transketolase_C"/>
</dbReference>
<dbReference type="InterPro" id="IPR049557">
    <property type="entry name" value="Transketolase_CS"/>
</dbReference>
<dbReference type="NCBIfam" id="TIGR00204">
    <property type="entry name" value="dxs"/>
    <property type="match status" value="1"/>
</dbReference>
<dbReference type="NCBIfam" id="NF003933">
    <property type="entry name" value="PRK05444.2-2"/>
    <property type="match status" value="1"/>
</dbReference>
<dbReference type="PANTHER" id="PTHR43322">
    <property type="entry name" value="1-D-DEOXYXYLULOSE 5-PHOSPHATE SYNTHASE-RELATED"/>
    <property type="match status" value="1"/>
</dbReference>
<dbReference type="PANTHER" id="PTHR43322:SF5">
    <property type="entry name" value="1-DEOXY-D-XYLULOSE-5-PHOSPHATE SYNTHASE, CHLOROPLASTIC"/>
    <property type="match status" value="1"/>
</dbReference>
<dbReference type="Pfam" id="PF13292">
    <property type="entry name" value="DXP_synthase_N"/>
    <property type="match status" value="1"/>
</dbReference>
<dbReference type="Pfam" id="PF02779">
    <property type="entry name" value="Transket_pyr"/>
    <property type="match status" value="1"/>
</dbReference>
<dbReference type="Pfam" id="PF02780">
    <property type="entry name" value="Transketolase_C"/>
    <property type="match status" value="1"/>
</dbReference>
<dbReference type="SMART" id="SM00861">
    <property type="entry name" value="Transket_pyr"/>
    <property type="match status" value="1"/>
</dbReference>
<dbReference type="SUPFAM" id="SSF52518">
    <property type="entry name" value="Thiamin diphosphate-binding fold (THDP-binding)"/>
    <property type="match status" value="2"/>
</dbReference>
<dbReference type="SUPFAM" id="SSF52922">
    <property type="entry name" value="TK C-terminal domain-like"/>
    <property type="match status" value="1"/>
</dbReference>
<dbReference type="PROSITE" id="PS00801">
    <property type="entry name" value="TRANSKETOLASE_1"/>
    <property type="match status" value="1"/>
</dbReference>
<dbReference type="PROSITE" id="PS00802">
    <property type="entry name" value="TRANSKETOLASE_2"/>
    <property type="match status" value="1"/>
</dbReference>
<protein>
    <recommendedName>
        <fullName evidence="1">1-deoxy-D-xylulose-5-phosphate synthase</fullName>
        <ecNumber evidence="1">2.2.1.7</ecNumber>
    </recommendedName>
    <alternativeName>
        <fullName evidence="1">1-deoxyxylulose-5-phosphate synthase</fullName>
        <shortName evidence="1">DXP synthase</shortName>
        <shortName evidence="1">DXPS</shortName>
    </alternativeName>
</protein>
<name>DXS_ECO45</name>
<keyword id="KW-0414">Isoprene biosynthesis</keyword>
<keyword id="KW-0460">Magnesium</keyword>
<keyword id="KW-0479">Metal-binding</keyword>
<keyword id="KW-1185">Reference proteome</keyword>
<keyword id="KW-0784">Thiamine biosynthesis</keyword>
<keyword id="KW-0786">Thiamine pyrophosphate</keyword>
<keyword id="KW-0808">Transferase</keyword>
<evidence type="ECO:0000255" key="1">
    <source>
        <dbReference type="HAMAP-Rule" id="MF_00315"/>
    </source>
</evidence>
<organism>
    <name type="scientific">Escherichia coli O45:K1 (strain S88 / ExPEC)</name>
    <dbReference type="NCBI Taxonomy" id="585035"/>
    <lineage>
        <taxon>Bacteria</taxon>
        <taxon>Pseudomonadati</taxon>
        <taxon>Pseudomonadota</taxon>
        <taxon>Gammaproteobacteria</taxon>
        <taxon>Enterobacterales</taxon>
        <taxon>Enterobacteriaceae</taxon>
        <taxon>Escherichia</taxon>
    </lineage>
</organism>
<accession>B7MD78</accession>
<feature type="chain" id="PRO_1000119545" description="1-deoxy-D-xylulose-5-phosphate synthase">
    <location>
        <begin position="1"/>
        <end position="620"/>
    </location>
</feature>
<feature type="binding site" evidence="1">
    <location>
        <position position="80"/>
    </location>
    <ligand>
        <name>thiamine diphosphate</name>
        <dbReference type="ChEBI" id="CHEBI:58937"/>
    </ligand>
</feature>
<feature type="binding site" evidence="1">
    <location>
        <begin position="121"/>
        <end position="123"/>
    </location>
    <ligand>
        <name>thiamine diphosphate</name>
        <dbReference type="ChEBI" id="CHEBI:58937"/>
    </ligand>
</feature>
<feature type="binding site" evidence="1">
    <location>
        <position position="152"/>
    </location>
    <ligand>
        <name>Mg(2+)</name>
        <dbReference type="ChEBI" id="CHEBI:18420"/>
    </ligand>
</feature>
<feature type="binding site" evidence="1">
    <location>
        <begin position="153"/>
        <end position="154"/>
    </location>
    <ligand>
        <name>thiamine diphosphate</name>
        <dbReference type="ChEBI" id="CHEBI:58937"/>
    </ligand>
</feature>
<feature type="binding site" evidence="1">
    <location>
        <position position="181"/>
    </location>
    <ligand>
        <name>Mg(2+)</name>
        <dbReference type="ChEBI" id="CHEBI:18420"/>
    </ligand>
</feature>
<feature type="binding site" evidence="1">
    <location>
        <position position="181"/>
    </location>
    <ligand>
        <name>thiamine diphosphate</name>
        <dbReference type="ChEBI" id="CHEBI:58937"/>
    </ligand>
</feature>
<feature type="binding site" evidence="1">
    <location>
        <position position="288"/>
    </location>
    <ligand>
        <name>thiamine diphosphate</name>
        <dbReference type="ChEBI" id="CHEBI:58937"/>
    </ligand>
</feature>
<feature type="binding site" evidence="1">
    <location>
        <position position="370"/>
    </location>
    <ligand>
        <name>thiamine diphosphate</name>
        <dbReference type="ChEBI" id="CHEBI:58937"/>
    </ligand>
</feature>
<sequence length="620" mass="67603">MSFDIAKYPTLALVDSTQELRLLPKESLPKLCDELRRYLLDSVSRSSGHFASGLGTVELTVALHYVYNTPFDQLIWDVGHQAYPHKILTGRRDKIGTIRQKGGLHPFPWRGESEYDVLSVGHSSTSISAGIGIAVAAEKEGKNRRTVCVIGDGAITAGMAFEAMNHAGDIRPDMLVVLNDNEMSISENVGALNNHLAQLLSGKLYSSLREGGKKVFSGVPPIKELLKRTEEHIKGMVVPGTLFEELGFNYIGPVDGHDVLGLITTLKNMRDLKGPQFLHIMTKKGRGYEPAEKDPITFHAVPKFDPSSGCLPKSSGGLPSYSKIFGDWLCETAAKDNKLMAITPAMREGSGMVEFSRKFPDRYFDVAIAEQHAVTFAAGLAIGGYKPIVAIYSTFLQRAYDQVLHDVAIQKLPVLFAIDRAGIVGADGQTHQGAFDLSYLRCIPEMVIMTPSDENECRQMLYTGYHYNDGPSAVRYPRGNAVGVELTPLEKLPIGKGIVKRRGEKLAILNFGTLMPEAAKVAESLNATLVDMRFVKPLDEALILEMAASHEALVTVEENAIMGGAGSGVNEVLMAHRKPVPVLNIGLPDFFIPQGTQEEMRAELGLDAAGMEAKIKAWLA</sequence>